<proteinExistence type="inferred from homology"/>
<sequence>MQNFQPRHFAIVPAAGSGSRMATSRPKQYLPLLGKPLIFHSLAVLCAAPDVDKVFVVLSVEDAEWRRHDWSVLGPKLVPLFCGGGTRADSVLAGLRAVADEIEPSDWVLVHDAARPCLAPWHIEKLARELARDEVGGLLAVPVADTLKRADEHRQVLATVPRENLWQAQTPQMFRHVMLRRALEAATNATDEASAIEAAGLHPRLVESDATNLKVTYPLDLHLAEWILTNRGS</sequence>
<protein>
    <recommendedName>
        <fullName evidence="1">2-C-methyl-D-erythritol 4-phosphate cytidylyltransferase</fullName>
        <ecNumber evidence="1">2.7.7.60</ecNumber>
    </recommendedName>
    <alternativeName>
        <fullName evidence="1">4-diphosphocytidyl-2C-methyl-D-erythritol synthase</fullName>
    </alternativeName>
    <alternativeName>
        <fullName evidence="1">MEP cytidylyltransferase</fullName>
        <shortName evidence="1">MCT</shortName>
    </alternativeName>
</protein>
<evidence type="ECO:0000255" key="1">
    <source>
        <dbReference type="HAMAP-Rule" id="MF_00108"/>
    </source>
</evidence>
<comment type="function">
    <text evidence="1">Catalyzes the formation of 4-diphosphocytidyl-2-C-methyl-D-erythritol from CTP and 2-C-methyl-D-erythritol 4-phosphate (MEP).</text>
</comment>
<comment type="catalytic activity">
    <reaction evidence="1">
        <text>2-C-methyl-D-erythritol 4-phosphate + CTP + H(+) = 4-CDP-2-C-methyl-D-erythritol + diphosphate</text>
        <dbReference type="Rhea" id="RHEA:13429"/>
        <dbReference type="ChEBI" id="CHEBI:15378"/>
        <dbReference type="ChEBI" id="CHEBI:33019"/>
        <dbReference type="ChEBI" id="CHEBI:37563"/>
        <dbReference type="ChEBI" id="CHEBI:57823"/>
        <dbReference type="ChEBI" id="CHEBI:58262"/>
        <dbReference type="EC" id="2.7.7.60"/>
    </reaction>
</comment>
<comment type="pathway">
    <text evidence="1">Isoprenoid biosynthesis; isopentenyl diphosphate biosynthesis via DXP pathway; isopentenyl diphosphate from 1-deoxy-D-xylulose 5-phosphate: step 2/6.</text>
</comment>
<comment type="similarity">
    <text evidence="1">Belongs to the IspD/TarI cytidylyltransferase family. IspD subfamily.</text>
</comment>
<dbReference type="EC" id="2.7.7.60" evidence="1"/>
<dbReference type="EMBL" id="CR555306">
    <property type="protein sequence ID" value="CAI09865.1"/>
    <property type="molecule type" value="Genomic_DNA"/>
</dbReference>
<dbReference type="RefSeq" id="WP_011239518.1">
    <property type="nucleotide sequence ID" value="NC_006513.1"/>
</dbReference>
<dbReference type="SMR" id="Q5NYJ9"/>
<dbReference type="STRING" id="76114.ebA6543"/>
<dbReference type="KEGG" id="eba:ebA6543"/>
<dbReference type="eggNOG" id="COG1211">
    <property type="taxonomic scope" value="Bacteria"/>
</dbReference>
<dbReference type="HOGENOM" id="CLU_061281_3_1_4"/>
<dbReference type="UniPathway" id="UPA00056">
    <property type="reaction ID" value="UER00093"/>
</dbReference>
<dbReference type="Proteomes" id="UP000006552">
    <property type="component" value="Chromosome"/>
</dbReference>
<dbReference type="GO" id="GO:0050518">
    <property type="term" value="F:2-C-methyl-D-erythritol 4-phosphate cytidylyltransferase activity"/>
    <property type="evidence" value="ECO:0007669"/>
    <property type="project" value="UniProtKB-UniRule"/>
</dbReference>
<dbReference type="GO" id="GO:0019288">
    <property type="term" value="P:isopentenyl diphosphate biosynthetic process, methylerythritol 4-phosphate pathway"/>
    <property type="evidence" value="ECO:0007669"/>
    <property type="project" value="UniProtKB-UniRule"/>
</dbReference>
<dbReference type="CDD" id="cd02516">
    <property type="entry name" value="CDP-ME_synthetase"/>
    <property type="match status" value="1"/>
</dbReference>
<dbReference type="FunFam" id="3.90.550.10:FF:000003">
    <property type="entry name" value="2-C-methyl-D-erythritol 4-phosphate cytidylyltransferase"/>
    <property type="match status" value="1"/>
</dbReference>
<dbReference type="Gene3D" id="3.90.550.10">
    <property type="entry name" value="Spore Coat Polysaccharide Biosynthesis Protein SpsA, Chain A"/>
    <property type="match status" value="1"/>
</dbReference>
<dbReference type="HAMAP" id="MF_00108">
    <property type="entry name" value="IspD"/>
    <property type="match status" value="1"/>
</dbReference>
<dbReference type="InterPro" id="IPR001228">
    <property type="entry name" value="IspD"/>
</dbReference>
<dbReference type="InterPro" id="IPR034683">
    <property type="entry name" value="IspD/TarI"/>
</dbReference>
<dbReference type="InterPro" id="IPR050088">
    <property type="entry name" value="IspD/TarI_cytidylyltransf_bact"/>
</dbReference>
<dbReference type="InterPro" id="IPR018294">
    <property type="entry name" value="ISPD_synthase_CS"/>
</dbReference>
<dbReference type="InterPro" id="IPR029044">
    <property type="entry name" value="Nucleotide-diphossugar_trans"/>
</dbReference>
<dbReference type="NCBIfam" id="TIGR00453">
    <property type="entry name" value="ispD"/>
    <property type="match status" value="1"/>
</dbReference>
<dbReference type="PANTHER" id="PTHR32125">
    <property type="entry name" value="2-C-METHYL-D-ERYTHRITOL 4-PHOSPHATE CYTIDYLYLTRANSFERASE, CHLOROPLASTIC"/>
    <property type="match status" value="1"/>
</dbReference>
<dbReference type="PANTHER" id="PTHR32125:SF4">
    <property type="entry name" value="2-C-METHYL-D-ERYTHRITOL 4-PHOSPHATE CYTIDYLYLTRANSFERASE, CHLOROPLASTIC"/>
    <property type="match status" value="1"/>
</dbReference>
<dbReference type="Pfam" id="PF01128">
    <property type="entry name" value="IspD"/>
    <property type="match status" value="1"/>
</dbReference>
<dbReference type="SUPFAM" id="SSF53448">
    <property type="entry name" value="Nucleotide-diphospho-sugar transferases"/>
    <property type="match status" value="1"/>
</dbReference>
<dbReference type="PROSITE" id="PS01295">
    <property type="entry name" value="ISPD"/>
    <property type="match status" value="1"/>
</dbReference>
<gene>
    <name evidence="1" type="primary">ispD</name>
    <name type="ordered locus">AZOSEA37400</name>
    <name type="ORF">ebA6543</name>
</gene>
<name>ISPD_AROAE</name>
<reference key="1">
    <citation type="journal article" date="2005" name="Arch. Microbiol.">
        <title>The genome sequence of an anaerobic aromatic-degrading denitrifying bacterium, strain EbN1.</title>
        <authorList>
            <person name="Rabus R."/>
            <person name="Kube M."/>
            <person name="Heider J."/>
            <person name="Beck A."/>
            <person name="Heitmann K."/>
            <person name="Widdel F."/>
            <person name="Reinhardt R."/>
        </authorList>
    </citation>
    <scope>NUCLEOTIDE SEQUENCE [LARGE SCALE GENOMIC DNA]</scope>
    <source>
        <strain>DSM 19018 / LMG 30748 / EbN1</strain>
    </source>
</reference>
<organism>
    <name type="scientific">Aromatoleum aromaticum (strain DSM 19018 / LMG 30748 / EbN1)</name>
    <name type="common">Azoarcus sp. (strain EbN1)</name>
    <dbReference type="NCBI Taxonomy" id="76114"/>
    <lineage>
        <taxon>Bacteria</taxon>
        <taxon>Pseudomonadati</taxon>
        <taxon>Pseudomonadota</taxon>
        <taxon>Betaproteobacteria</taxon>
        <taxon>Rhodocyclales</taxon>
        <taxon>Rhodocyclaceae</taxon>
        <taxon>Aromatoleum</taxon>
    </lineage>
</organism>
<keyword id="KW-0414">Isoprene biosynthesis</keyword>
<keyword id="KW-0548">Nucleotidyltransferase</keyword>
<keyword id="KW-1185">Reference proteome</keyword>
<keyword id="KW-0808">Transferase</keyword>
<feature type="chain" id="PRO_0000237769" description="2-C-methyl-D-erythritol 4-phosphate cytidylyltransferase">
    <location>
        <begin position="1"/>
        <end position="233"/>
    </location>
</feature>
<feature type="site" description="Transition state stabilizer" evidence="1">
    <location>
        <position position="20"/>
    </location>
</feature>
<feature type="site" description="Transition state stabilizer" evidence="1">
    <location>
        <position position="27"/>
    </location>
</feature>
<feature type="site" description="Positions MEP for the nucleophilic attack" evidence="1">
    <location>
        <position position="162"/>
    </location>
</feature>
<feature type="site" description="Positions MEP for the nucleophilic attack" evidence="1">
    <location>
        <position position="214"/>
    </location>
</feature>
<accession>Q5NYJ9</accession>